<reference key="1">
    <citation type="journal article" date="2008" name="DNA Res.">
        <title>Comparative genome analysis of Lactobacillus reuteri and Lactobacillus fermentum reveal a genomic island for reuterin and cobalamin production.</title>
        <authorList>
            <person name="Morita H."/>
            <person name="Toh H."/>
            <person name="Fukuda S."/>
            <person name="Horikawa H."/>
            <person name="Oshima K."/>
            <person name="Suzuki T."/>
            <person name="Murakami M."/>
            <person name="Hisamatsu S."/>
            <person name="Kato Y."/>
            <person name="Takizawa T."/>
            <person name="Fukuoka H."/>
            <person name="Yoshimura T."/>
            <person name="Itoh K."/>
            <person name="O'Sullivan D.J."/>
            <person name="McKay L.L."/>
            <person name="Ohno H."/>
            <person name="Kikuchi J."/>
            <person name="Masaoka T."/>
            <person name="Hattori M."/>
        </authorList>
    </citation>
    <scope>NUCLEOTIDE SEQUENCE [LARGE SCALE GENOMIC DNA]</scope>
    <source>
        <strain>JCM 1112</strain>
    </source>
</reference>
<accession>B2G6W2</accession>
<protein>
    <recommendedName>
        <fullName evidence="1">Protein GrpE</fullName>
    </recommendedName>
    <alternativeName>
        <fullName evidence="1">HSP-70 cofactor</fullName>
    </alternativeName>
</protein>
<organism>
    <name type="scientific">Limosilactobacillus reuteri subsp. reuteri (strain JCM 1112)</name>
    <name type="common">Lactobacillus reuteri</name>
    <dbReference type="NCBI Taxonomy" id="557433"/>
    <lineage>
        <taxon>Bacteria</taxon>
        <taxon>Bacillati</taxon>
        <taxon>Bacillota</taxon>
        <taxon>Bacilli</taxon>
        <taxon>Lactobacillales</taxon>
        <taxon>Lactobacillaceae</taxon>
        <taxon>Limosilactobacillus</taxon>
    </lineage>
</organism>
<comment type="function">
    <text evidence="1">Participates actively in the response to hyperosmotic and heat shock by preventing the aggregation of stress-denatured proteins, in association with DnaK and GrpE. It is the nucleotide exchange factor for DnaK and may function as a thermosensor. Unfolded proteins bind initially to DnaJ; upon interaction with the DnaJ-bound protein, DnaK hydrolyzes its bound ATP, resulting in the formation of a stable complex. GrpE releases ADP from DnaK; ATP binding to DnaK triggers the release of the substrate protein, thus completing the reaction cycle. Several rounds of ATP-dependent interactions between DnaJ, DnaK and GrpE are required for fully efficient folding.</text>
</comment>
<comment type="subunit">
    <text evidence="1">Homodimer.</text>
</comment>
<comment type="subcellular location">
    <subcellularLocation>
        <location evidence="1">Cytoplasm</location>
    </subcellularLocation>
</comment>
<comment type="similarity">
    <text evidence="1">Belongs to the GrpE family.</text>
</comment>
<name>GRPE_LIMRJ</name>
<gene>
    <name evidence="1" type="primary">grpE</name>
    <name type="ordered locus">LAR_0678</name>
</gene>
<evidence type="ECO:0000255" key="1">
    <source>
        <dbReference type="HAMAP-Rule" id="MF_01151"/>
    </source>
</evidence>
<evidence type="ECO:0000256" key="2">
    <source>
        <dbReference type="SAM" id="MobiDB-lite"/>
    </source>
</evidence>
<sequence length="190" mass="21430">MAKEKQEEQQKQTAPENEKAPKKDIKKEASDKKGDQTSKLKEEIADLKKQLADKDDKYLRAEAEIQNMTNRFNKERAQILKYDGQDLAKSILPVLDNLKRALAIEVVDDNGKQLKKGIQMVHDHLVKALNDHGITEIKADGETFDPTLHQAVQTVPVEEGQKPETVVNVLQAGYQLKDRVLRPAMVVVAQ</sequence>
<keyword id="KW-0143">Chaperone</keyword>
<keyword id="KW-0963">Cytoplasm</keyword>
<keyword id="KW-0346">Stress response</keyword>
<dbReference type="EMBL" id="AP007281">
    <property type="protein sequence ID" value="BAG25194.1"/>
    <property type="molecule type" value="Genomic_DNA"/>
</dbReference>
<dbReference type="RefSeq" id="WP_003668171.1">
    <property type="nucleotide sequence ID" value="NC_010609.1"/>
</dbReference>
<dbReference type="SMR" id="B2G6W2"/>
<dbReference type="KEGG" id="lrf:LAR_0678"/>
<dbReference type="HOGENOM" id="CLU_057217_6_3_9"/>
<dbReference type="GO" id="GO:0005737">
    <property type="term" value="C:cytoplasm"/>
    <property type="evidence" value="ECO:0007669"/>
    <property type="project" value="UniProtKB-SubCell"/>
</dbReference>
<dbReference type="GO" id="GO:0000774">
    <property type="term" value="F:adenyl-nucleotide exchange factor activity"/>
    <property type="evidence" value="ECO:0007669"/>
    <property type="project" value="InterPro"/>
</dbReference>
<dbReference type="GO" id="GO:0042803">
    <property type="term" value="F:protein homodimerization activity"/>
    <property type="evidence" value="ECO:0007669"/>
    <property type="project" value="InterPro"/>
</dbReference>
<dbReference type="GO" id="GO:0051087">
    <property type="term" value="F:protein-folding chaperone binding"/>
    <property type="evidence" value="ECO:0007669"/>
    <property type="project" value="InterPro"/>
</dbReference>
<dbReference type="GO" id="GO:0051082">
    <property type="term" value="F:unfolded protein binding"/>
    <property type="evidence" value="ECO:0007669"/>
    <property type="project" value="TreeGrafter"/>
</dbReference>
<dbReference type="GO" id="GO:0006457">
    <property type="term" value="P:protein folding"/>
    <property type="evidence" value="ECO:0007669"/>
    <property type="project" value="InterPro"/>
</dbReference>
<dbReference type="CDD" id="cd00446">
    <property type="entry name" value="GrpE"/>
    <property type="match status" value="1"/>
</dbReference>
<dbReference type="FunFam" id="2.30.22.10:FF:000001">
    <property type="entry name" value="Protein GrpE"/>
    <property type="match status" value="1"/>
</dbReference>
<dbReference type="Gene3D" id="3.90.20.20">
    <property type="match status" value="1"/>
</dbReference>
<dbReference type="Gene3D" id="2.30.22.10">
    <property type="entry name" value="Head domain of nucleotide exchange factor GrpE"/>
    <property type="match status" value="1"/>
</dbReference>
<dbReference type="HAMAP" id="MF_01151">
    <property type="entry name" value="GrpE"/>
    <property type="match status" value="1"/>
</dbReference>
<dbReference type="InterPro" id="IPR000740">
    <property type="entry name" value="GrpE"/>
</dbReference>
<dbReference type="InterPro" id="IPR013805">
    <property type="entry name" value="GrpE_coiled_coil"/>
</dbReference>
<dbReference type="InterPro" id="IPR009012">
    <property type="entry name" value="GrpE_head"/>
</dbReference>
<dbReference type="NCBIfam" id="NF010738">
    <property type="entry name" value="PRK14140.1"/>
    <property type="match status" value="1"/>
</dbReference>
<dbReference type="NCBIfam" id="NF010759">
    <property type="entry name" value="PRK14162.1"/>
    <property type="match status" value="1"/>
</dbReference>
<dbReference type="PANTHER" id="PTHR21237">
    <property type="entry name" value="GRPE PROTEIN"/>
    <property type="match status" value="1"/>
</dbReference>
<dbReference type="PANTHER" id="PTHR21237:SF23">
    <property type="entry name" value="GRPE PROTEIN HOMOLOG, MITOCHONDRIAL"/>
    <property type="match status" value="1"/>
</dbReference>
<dbReference type="Pfam" id="PF01025">
    <property type="entry name" value="GrpE"/>
    <property type="match status" value="1"/>
</dbReference>
<dbReference type="PRINTS" id="PR00773">
    <property type="entry name" value="GRPEPROTEIN"/>
</dbReference>
<dbReference type="SUPFAM" id="SSF58014">
    <property type="entry name" value="Coiled-coil domain of nucleotide exchange factor GrpE"/>
    <property type="match status" value="1"/>
</dbReference>
<dbReference type="SUPFAM" id="SSF51064">
    <property type="entry name" value="Head domain of nucleotide exchange factor GrpE"/>
    <property type="match status" value="1"/>
</dbReference>
<dbReference type="PROSITE" id="PS01071">
    <property type="entry name" value="GRPE"/>
    <property type="match status" value="1"/>
</dbReference>
<feature type="chain" id="PRO_1000164198" description="Protein GrpE">
    <location>
        <begin position="1"/>
        <end position="190"/>
    </location>
</feature>
<feature type="region of interest" description="Disordered" evidence="2">
    <location>
        <begin position="1"/>
        <end position="41"/>
    </location>
</feature>
<proteinExistence type="inferred from homology"/>